<feature type="chain" id="PRO_0000359235" description="Acireductone dioxygenase">
    <location>
        <begin position="1"/>
        <end position="179"/>
    </location>
</feature>
<feature type="binding site" evidence="1">
    <location>
        <position position="99"/>
    </location>
    <ligand>
        <name>Fe(2+)</name>
        <dbReference type="ChEBI" id="CHEBI:29033"/>
    </ligand>
</feature>
<feature type="binding site" evidence="1">
    <location>
        <position position="99"/>
    </location>
    <ligand>
        <name>Ni(2+)</name>
        <dbReference type="ChEBI" id="CHEBI:49786"/>
    </ligand>
</feature>
<feature type="binding site" evidence="1">
    <location>
        <position position="101"/>
    </location>
    <ligand>
        <name>Fe(2+)</name>
        <dbReference type="ChEBI" id="CHEBI:29033"/>
    </ligand>
</feature>
<feature type="binding site" evidence="1">
    <location>
        <position position="101"/>
    </location>
    <ligand>
        <name>Ni(2+)</name>
        <dbReference type="ChEBI" id="CHEBI:49786"/>
    </ligand>
</feature>
<feature type="binding site" evidence="1">
    <location>
        <position position="105"/>
    </location>
    <ligand>
        <name>Fe(2+)</name>
        <dbReference type="ChEBI" id="CHEBI:29033"/>
    </ligand>
</feature>
<feature type="binding site" evidence="1">
    <location>
        <position position="105"/>
    </location>
    <ligand>
        <name>Ni(2+)</name>
        <dbReference type="ChEBI" id="CHEBI:49786"/>
    </ligand>
</feature>
<feature type="binding site" evidence="1">
    <location>
        <position position="143"/>
    </location>
    <ligand>
        <name>Fe(2+)</name>
        <dbReference type="ChEBI" id="CHEBI:29033"/>
    </ligand>
</feature>
<feature type="binding site" evidence="1">
    <location>
        <position position="143"/>
    </location>
    <ligand>
        <name>Ni(2+)</name>
        <dbReference type="ChEBI" id="CHEBI:49786"/>
    </ligand>
</feature>
<feature type="site" description="May play a role in metal incorporation in vivo" evidence="1">
    <location>
        <position position="98"/>
    </location>
</feature>
<feature type="site" description="May play a role in transmitting local conformational changes" evidence="1">
    <location>
        <position position="104"/>
    </location>
</feature>
<feature type="site" description="Important to generate the dianion" evidence="1">
    <location>
        <position position="107"/>
    </location>
</feature>
<keyword id="KW-0028">Amino-acid biosynthesis</keyword>
<keyword id="KW-0223">Dioxygenase</keyword>
<keyword id="KW-0408">Iron</keyword>
<keyword id="KW-0479">Metal-binding</keyword>
<keyword id="KW-0486">Methionine biosynthesis</keyword>
<keyword id="KW-0533">Nickel</keyword>
<keyword id="KW-0560">Oxidoreductase</keyword>
<accession>B2VAA3</accession>
<dbReference type="EC" id="1.13.11.54" evidence="1"/>
<dbReference type="EC" id="1.13.11.53" evidence="1"/>
<dbReference type="EMBL" id="CP001080">
    <property type="protein sequence ID" value="ACD66876.1"/>
    <property type="molecule type" value="Genomic_DNA"/>
</dbReference>
<dbReference type="RefSeq" id="WP_012459937.1">
    <property type="nucleotide sequence ID" value="NC_010730.1"/>
</dbReference>
<dbReference type="SMR" id="B2VAA3"/>
<dbReference type="STRING" id="436114.SYO3AOP1_1265"/>
<dbReference type="KEGG" id="sul:SYO3AOP1_1265"/>
<dbReference type="eggNOG" id="COG1791">
    <property type="taxonomic scope" value="Bacteria"/>
</dbReference>
<dbReference type="HOGENOM" id="CLU_125400_0_0_0"/>
<dbReference type="UniPathway" id="UPA00904">
    <property type="reaction ID" value="UER00878"/>
</dbReference>
<dbReference type="GO" id="GO:0010308">
    <property type="term" value="F:acireductone dioxygenase (Ni2+-requiring) activity"/>
    <property type="evidence" value="ECO:0007669"/>
    <property type="project" value="UniProtKB-UniRule"/>
</dbReference>
<dbReference type="GO" id="GO:0010309">
    <property type="term" value="F:acireductone dioxygenase [iron(II)-requiring] activity"/>
    <property type="evidence" value="ECO:0007669"/>
    <property type="project" value="UniProtKB-UniRule"/>
</dbReference>
<dbReference type="GO" id="GO:0005506">
    <property type="term" value="F:iron ion binding"/>
    <property type="evidence" value="ECO:0007669"/>
    <property type="project" value="UniProtKB-UniRule"/>
</dbReference>
<dbReference type="GO" id="GO:0016151">
    <property type="term" value="F:nickel cation binding"/>
    <property type="evidence" value="ECO:0007669"/>
    <property type="project" value="UniProtKB-UniRule"/>
</dbReference>
<dbReference type="GO" id="GO:0019509">
    <property type="term" value="P:L-methionine salvage from methylthioadenosine"/>
    <property type="evidence" value="ECO:0007669"/>
    <property type="project" value="UniProtKB-UniRule"/>
</dbReference>
<dbReference type="GO" id="GO:0019284">
    <property type="term" value="P:L-methionine salvage from S-adenosylmethionine"/>
    <property type="evidence" value="ECO:0007669"/>
    <property type="project" value="InterPro"/>
</dbReference>
<dbReference type="CDD" id="cd02232">
    <property type="entry name" value="cupin_ARD"/>
    <property type="match status" value="1"/>
</dbReference>
<dbReference type="Gene3D" id="2.60.120.10">
    <property type="entry name" value="Jelly Rolls"/>
    <property type="match status" value="1"/>
</dbReference>
<dbReference type="HAMAP" id="MF_01682">
    <property type="entry name" value="Salvage_MtnD"/>
    <property type="match status" value="1"/>
</dbReference>
<dbReference type="InterPro" id="IPR004313">
    <property type="entry name" value="ARD"/>
</dbReference>
<dbReference type="InterPro" id="IPR023956">
    <property type="entry name" value="ARD_bac"/>
</dbReference>
<dbReference type="InterPro" id="IPR014710">
    <property type="entry name" value="RmlC-like_jellyroll"/>
</dbReference>
<dbReference type="InterPro" id="IPR011051">
    <property type="entry name" value="RmlC_Cupin_sf"/>
</dbReference>
<dbReference type="PANTHER" id="PTHR23418">
    <property type="entry name" value="ACIREDUCTONE DIOXYGENASE"/>
    <property type="match status" value="1"/>
</dbReference>
<dbReference type="PANTHER" id="PTHR23418:SF0">
    <property type="entry name" value="ACIREDUCTONE DIOXYGENASE"/>
    <property type="match status" value="1"/>
</dbReference>
<dbReference type="Pfam" id="PF03079">
    <property type="entry name" value="ARD"/>
    <property type="match status" value="1"/>
</dbReference>
<dbReference type="SUPFAM" id="SSF51182">
    <property type="entry name" value="RmlC-like cupins"/>
    <property type="match status" value="1"/>
</dbReference>
<reference key="1">
    <citation type="journal article" date="2009" name="J. Bacteriol.">
        <title>Complete and draft genome sequences of six members of the Aquificales.</title>
        <authorList>
            <person name="Reysenbach A.-L."/>
            <person name="Hamamura N."/>
            <person name="Podar M."/>
            <person name="Griffiths E."/>
            <person name="Ferreira S."/>
            <person name="Hochstein R."/>
            <person name="Heidelberg J."/>
            <person name="Johnson J."/>
            <person name="Mead D."/>
            <person name="Pohorille A."/>
            <person name="Sarmiento M."/>
            <person name="Schweighofer K."/>
            <person name="Seshadri R."/>
            <person name="Voytek M.A."/>
        </authorList>
    </citation>
    <scope>NUCLEOTIDE SEQUENCE [LARGE SCALE GENOMIC DNA]</scope>
    <source>
        <strain>YO3AOP1</strain>
    </source>
</reference>
<sequence>MARLVFRKNGKVIENPEEIKSFLSQYGVVYDVWGVDRLPEDVRKNYDIDEENSKAIIQAYEKELKELKEKMGYITEDIVVLSEKTPNLDGLMAKFKREHHHIDDEVRFVVDGSGIFPVKIEDDIVDIHVEAGELIVVPAGARHWFELDENRKIKCIRVFKTPAGWEAIYNENETATMRD</sequence>
<evidence type="ECO:0000255" key="1">
    <source>
        <dbReference type="HAMAP-Rule" id="MF_01682"/>
    </source>
</evidence>
<proteinExistence type="inferred from homology"/>
<organism>
    <name type="scientific">Sulfurihydrogenibium sp. (strain YO3AOP1)</name>
    <dbReference type="NCBI Taxonomy" id="436114"/>
    <lineage>
        <taxon>Bacteria</taxon>
        <taxon>Pseudomonadati</taxon>
        <taxon>Aquificota</taxon>
        <taxon>Aquificia</taxon>
        <taxon>Aquificales</taxon>
        <taxon>Hydrogenothermaceae</taxon>
        <taxon>Sulfurihydrogenibium</taxon>
    </lineage>
</organism>
<name>MTND_SULSY</name>
<protein>
    <recommendedName>
        <fullName evidence="1">Acireductone dioxygenase</fullName>
    </recommendedName>
    <alternativeName>
        <fullName evidence="1">1,2-dihydroxy-3-keto-5-methylthiopentene dioxygenase</fullName>
        <shortName evidence="1">DHK-MTPene dioxygenase</shortName>
    </alternativeName>
    <alternativeName>
        <fullName evidence="1">Acireductone dioxygenase (Fe(2+)-requiring)</fullName>
        <shortName evidence="1">ARD'</shortName>
        <shortName evidence="1">Fe-ARD</shortName>
        <ecNumber evidence="1">1.13.11.54</ecNumber>
    </alternativeName>
    <alternativeName>
        <fullName evidence="1">Acireductone dioxygenase (Ni(2+)-requiring)</fullName>
        <shortName evidence="1">ARD</shortName>
        <shortName evidence="1">Ni-ARD</shortName>
        <ecNumber evidence="1">1.13.11.53</ecNumber>
    </alternativeName>
</protein>
<gene>
    <name evidence="1" type="primary">mtnD</name>
    <name type="ordered locus">SYO3AOP1_1265</name>
</gene>
<comment type="function">
    <text evidence="1">Catalyzes 2 different reactions between oxygen and the acireductone 1,2-dihydroxy-3-keto-5-methylthiopentene (DHK-MTPene) depending upon the metal bound in the active site. Fe-containing acireductone dioxygenase (Fe-ARD) produces formate and 2-keto-4-methylthiobutyrate (KMTB), the alpha-ketoacid precursor of methionine in the methionine recycle pathway. Ni-containing acireductone dioxygenase (Ni-ARD) produces methylthiopropionate, carbon monoxide and formate, and does not lie on the methionine recycle pathway.</text>
</comment>
<comment type="catalytic activity">
    <reaction evidence="1">
        <text>1,2-dihydroxy-5-(methylsulfanyl)pent-1-en-3-one + O2 = 3-(methylsulfanyl)propanoate + CO + formate + 2 H(+)</text>
        <dbReference type="Rhea" id="RHEA:14161"/>
        <dbReference type="ChEBI" id="CHEBI:15378"/>
        <dbReference type="ChEBI" id="CHEBI:15379"/>
        <dbReference type="ChEBI" id="CHEBI:15740"/>
        <dbReference type="ChEBI" id="CHEBI:17245"/>
        <dbReference type="ChEBI" id="CHEBI:49016"/>
        <dbReference type="ChEBI" id="CHEBI:49252"/>
        <dbReference type="EC" id="1.13.11.53"/>
    </reaction>
</comment>
<comment type="catalytic activity">
    <reaction evidence="1">
        <text>1,2-dihydroxy-5-(methylsulfanyl)pent-1-en-3-one + O2 = 4-methylsulfanyl-2-oxobutanoate + formate + 2 H(+)</text>
        <dbReference type="Rhea" id="RHEA:24504"/>
        <dbReference type="ChEBI" id="CHEBI:15378"/>
        <dbReference type="ChEBI" id="CHEBI:15379"/>
        <dbReference type="ChEBI" id="CHEBI:15740"/>
        <dbReference type="ChEBI" id="CHEBI:16723"/>
        <dbReference type="ChEBI" id="CHEBI:49252"/>
        <dbReference type="EC" id="1.13.11.54"/>
    </reaction>
</comment>
<comment type="cofactor">
    <cofactor evidence="1">
        <name>Fe(2+)</name>
        <dbReference type="ChEBI" id="CHEBI:29033"/>
    </cofactor>
    <text evidence="1">Binds 1 Fe(2+) cation per monomer.</text>
</comment>
<comment type="cofactor">
    <cofactor evidence="1">
        <name>Ni(2+)</name>
        <dbReference type="ChEBI" id="CHEBI:49786"/>
    </cofactor>
    <text evidence="1">Binds 1 nickel ion per monomer.</text>
</comment>
<comment type="pathway">
    <text evidence="1">Amino-acid biosynthesis; L-methionine biosynthesis via salvage pathway; L-methionine from S-methyl-5-thio-alpha-D-ribose 1-phosphate: step 5/6.</text>
</comment>
<comment type="subunit">
    <text evidence="1">Monomer.</text>
</comment>
<comment type="similarity">
    <text evidence="1">Belongs to the acireductone dioxygenase (ARD) family.</text>
</comment>